<reference key="1">
    <citation type="journal article" date="2005" name="Nat. Biotechnol.">
        <title>Complete genome sequence of the acetic acid bacterium Gluconobacter oxydans.</title>
        <authorList>
            <person name="Prust C."/>
            <person name="Hoffmeister M."/>
            <person name="Liesegang H."/>
            <person name="Wiezer A."/>
            <person name="Fricke W.F."/>
            <person name="Ehrenreich A."/>
            <person name="Gottschalk G."/>
            <person name="Deppenmeier U."/>
        </authorList>
    </citation>
    <scope>NUCLEOTIDE SEQUENCE [LARGE SCALE GENOMIC DNA]</scope>
    <source>
        <strain>621H</strain>
    </source>
</reference>
<feature type="chain" id="PRO_1000058435" description="tRNA dimethylallyltransferase">
    <location>
        <begin position="1"/>
        <end position="332"/>
    </location>
</feature>
<feature type="region of interest" description="Interaction with substrate tRNA" evidence="1">
    <location>
        <begin position="42"/>
        <end position="45"/>
    </location>
</feature>
<feature type="region of interest" description="Interaction with substrate tRNA" evidence="1">
    <location>
        <begin position="166"/>
        <end position="170"/>
    </location>
</feature>
<feature type="binding site" evidence="1">
    <location>
        <begin position="17"/>
        <end position="24"/>
    </location>
    <ligand>
        <name>ATP</name>
        <dbReference type="ChEBI" id="CHEBI:30616"/>
    </ligand>
</feature>
<feature type="binding site" evidence="1">
    <location>
        <begin position="19"/>
        <end position="24"/>
    </location>
    <ligand>
        <name>substrate</name>
    </ligand>
</feature>
<feature type="site" description="Interaction with substrate tRNA" evidence="1">
    <location>
        <position position="108"/>
    </location>
</feature>
<feature type="site" description="Interaction with substrate tRNA" evidence="1">
    <location>
        <position position="130"/>
    </location>
</feature>
<gene>
    <name evidence="1" type="primary">miaA</name>
    <name type="ordered locus">GOX1086</name>
</gene>
<comment type="function">
    <text evidence="1">Catalyzes the transfer of a dimethylallyl group onto the adenine at position 37 in tRNAs that read codons beginning with uridine, leading to the formation of N6-(dimethylallyl)adenosine (i(6)A).</text>
</comment>
<comment type="catalytic activity">
    <reaction evidence="1">
        <text>adenosine(37) in tRNA + dimethylallyl diphosphate = N(6)-dimethylallyladenosine(37) in tRNA + diphosphate</text>
        <dbReference type="Rhea" id="RHEA:26482"/>
        <dbReference type="Rhea" id="RHEA-COMP:10162"/>
        <dbReference type="Rhea" id="RHEA-COMP:10375"/>
        <dbReference type="ChEBI" id="CHEBI:33019"/>
        <dbReference type="ChEBI" id="CHEBI:57623"/>
        <dbReference type="ChEBI" id="CHEBI:74411"/>
        <dbReference type="ChEBI" id="CHEBI:74415"/>
        <dbReference type="EC" id="2.5.1.75"/>
    </reaction>
</comment>
<comment type="cofactor">
    <cofactor evidence="1">
        <name>Mg(2+)</name>
        <dbReference type="ChEBI" id="CHEBI:18420"/>
    </cofactor>
</comment>
<comment type="subunit">
    <text evidence="1">Monomer.</text>
</comment>
<comment type="similarity">
    <text evidence="1">Belongs to the IPP transferase family.</text>
</comment>
<evidence type="ECO:0000255" key="1">
    <source>
        <dbReference type="HAMAP-Rule" id="MF_00185"/>
    </source>
</evidence>
<proteinExistence type="inferred from homology"/>
<keyword id="KW-0067">ATP-binding</keyword>
<keyword id="KW-0460">Magnesium</keyword>
<keyword id="KW-0547">Nucleotide-binding</keyword>
<keyword id="KW-1185">Reference proteome</keyword>
<keyword id="KW-0808">Transferase</keyword>
<keyword id="KW-0819">tRNA processing</keyword>
<protein>
    <recommendedName>
        <fullName evidence="1">tRNA dimethylallyltransferase</fullName>
        <ecNumber evidence="1">2.5.1.75</ecNumber>
    </recommendedName>
    <alternativeName>
        <fullName evidence="1">Dimethylallyl diphosphate:tRNA dimethylallyltransferase</fullName>
        <shortName evidence="1">DMAPP:tRNA dimethylallyltransferase</shortName>
        <shortName evidence="1">DMATase</shortName>
    </alternativeName>
    <alternativeName>
        <fullName evidence="1">Isopentenyl-diphosphate:tRNA isopentenyltransferase</fullName>
        <shortName evidence="1">IPP transferase</shortName>
        <shortName evidence="1">IPPT</shortName>
        <shortName evidence="1">IPTase</shortName>
    </alternativeName>
</protein>
<dbReference type="EC" id="2.5.1.75" evidence="1"/>
<dbReference type="EMBL" id="CP000009">
    <property type="protein sequence ID" value="AAW60855.1"/>
    <property type="molecule type" value="Genomic_DNA"/>
</dbReference>
<dbReference type="RefSeq" id="WP_011252647.1">
    <property type="nucleotide sequence ID" value="NC_006677.1"/>
</dbReference>
<dbReference type="SMR" id="Q5FRZ1"/>
<dbReference type="STRING" id="290633.GOX1086"/>
<dbReference type="KEGG" id="gox:GOX1086"/>
<dbReference type="eggNOG" id="COG0324">
    <property type="taxonomic scope" value="Bacteria"/>
</dbReference>
<dbReference type="HOGENOM" id="CLU_032616_0_1_5"/>
<dbReference type="Proteomes" id="UP000006375">
    <property type="component" value="Chromosome"/>
</dbReference>
<dbReference type="GO" id="GO:0005524">
    <property type="term" value="F:ATP binding"/>
    <property type="evidence" value="ECO:0007669"/>
    <property type="project" value="UniProtKB-UniRule"/>
</dbReference>
<dbReference type="GO" id="GO:0052381">
    <property type="term" value="F:tRNA dimethylallyltransferase activity"/>
    <property type="evidence" value="ECO:0007669"/>
    <property type="project" value="UniProtKB-UniRule"/>
</dbReference>
<dbReference type="GO" id="GO:0006400">
    <property type="term" value="P:tRNA modification"/>
    <property type="evidence" value="ECO:0007669"/>
    <property type="project" value="TreeGrafter"/>
</dbReference>
<dbReference type="Gene3D" id="1.10.20.140">
    <property type="match status" value="1"/>
</dbReference>
<dbReference type="Gene3D" id="3.40.50.300">
    <property type="entry name" value="P-loop containing nucleotide triphosphate hydrolases"/>
    <property type="match status" value="1"/>
</dbReference>
<dbReference type="HAMAP" id="MF_00185">
    <property type="entry name" value="IPP_trans"/>
    <property type="match status" value="1"/>
</dbReference>
<dbReference type="InterPro" id="IPR039657">
    <property type="entry name" value="Dimethylallyltransferase"/>
</dbReference>
<dbReference type="InterPro" id="IPR018022">
    <property type="entry name" value="IPT"/>
</dbReference>
<dbReference type="InterPro" id="IPR027417">
    <property type="entry name" value="P-loop_NTPase"/>
</dbReference>
<dbReference type="NCBIfam" id="TIGR00174">
    <property type="entry name" value="miaA"/>
    <property type="match status" value="1"/>
</dbReference>
<dbReference type="PANTHER" id="PTHR11088">
    <property type="entry name" value="TRNA DIMETHYLALLYLTRANSFERASE"/>
    <property type="match status" value="1"/>
</dbReference>
<dbReference type="PANTHER" id="PTHR11088:SF60">
    <property type="entry name" value="TRNA DIMETHYLALLYLTRANSFERASE"/>
    <property type="match status" value="1"/>
</dbReference>
<dbReference type="Pfam" id="PF01715">
    <property type="entry name" value="IPPT"/>
    <property type="match status" value="1"/>
</dbReference>
<dbReference type="SUPFAM" id="SSF52540">
    <property type="entry name" value="P-loop containing nucleoside triphosphate hydrolases"/>
    <property type="match status" value="1"/>
</dbReference>
<name>MIAA_GLUOX</name>
<sequence length="332" mass="36242">MNAPKTVTVKTALIVAGPTCSGKSALALDLARCFEGTVINADSMQVYRDLHILTARPHAADEAAVPHRLYGVLDAAVPGSVAWWRSEALREMDVAWAEERMPILCGGTGMYLRALTDGLVEVPDPGDAARSEARGLAEEIGPEALHARLMQVDPETASGLRPNDTQRISRAWEVWTGTGHGLAWWRSQPGLPPASCRFVSVQLDPEREGLRRAIDSRFGQMLEAGALEEVSALLERGLDPVLPAMRAHGVPELAAVLRGEVPLEEARKSAVLAIGRYTRRQATWFRHHALGKGDDGMISLRRYTHSAQESESQYEKIENFISERVDAAARAS</sequence>
<accession>Q5FRZ1</accession>
<organism>
    <name type="scientific">Gluconobacter oxydans (strain 621H)</name>
    <name type="common">Gluconobacter suboxydans</name>
    <dbReference type="NCBI Taxonomy" id="290633"/>
    <lineage>
        <taxon>Bacteria</taxon>
        <taxon>Pseudomonadati</taxon>
        <taxon>Pseudomonadota</taxon>
        <taxon>Alphaproteobacteria</taxon>
        <taxon>Acetobacterales</taxon>
        <taxon>Acetobacteraceae</taxon>
        <taxon>Gluconobacter</taxon>
    </lineage>
</organism>